<accession>P0DF67</accession>
<accession>Q79YE2</accession>
<accession>Q8K5Z7</accession>
<feature type="chain" id="PRO_0000411573" description="Protein translocase subunit SecA">
    <location>
        <begin position="1"/>
        <end position="839"/>
    </location>
</feature>
<feature type="region of interest" description="Disordered" evidence="2">
    <location>
        <begin position="780"/>
        <end position="839"/>
    </location>
</feature>
<feature type="compositionally biased region" description="Basic and acidic residues" evidence="2">
    <location>
        <begin position="780"/>
        <end position="790"/>
    </location>
</feature>
<feature type="compositionally biased region" description="Polar residues" evidence="2">
    <location>
        <begin position="791"/>
        <end position="809"/>
    </location>
</feature>
<feature type="compositionally biased region" description="Basic residues" evidence="2">
    <location>
        <begin position="827"/>
        <end position="839"/>
    </location>
</feature>
<feature type="binding site" evidence="1">
    <location>
        <position position="85"/>
    </location>
    <ligand>
        <name>ATP</name>
        <dbReference type="ChEBI" id="CHEBI:30616"/>
    </ligand>
</feature>
<feature type="binding site" evidence="1">
    <location>
        <begin position="103"/>
        <end position="107"/>
    </location>
    <ligand>
        <name>ATP</name>
        <dbReference type="ChEBI" id="CHEBI:30616"/>
    </ligand>
</feature>
<feature type="binding site" evidence="1">
    <location>
        <position position="493"/>
    </location>
    <ligand>
        <name>ATP</name>
        <dbReference type="ChEBI" id="CHEBI:30616"/>
    </ligand>
</feature>
<feature type="binding site" evidence="1">
    <location>
        <position position="821"/>
    </location>
    <ligand>
        <name>Zn(2+)</name>
        <dbReference type="ChEBI" id="CHEBI:29105"/>
    </ligand>
</feature>
<feature type="binding site" evidence="1">
    <location>
        <position position="823"/>
    </location>
    <ligand>
        <name>Zn(2+)</name>
        <dbReference type="ChEBI" id="CHEBI:29105"/>
    </ligand>
</feature>
<feature type="binding site" evidence="1">
    <location>
        <position position="832"/>
    </location>
    <ligand>
        <name>Zn(2+)</name>
        <dbReference type="ChEBI" id="CHEBI:29105"/>
    </ligand>
</feature>
<feature type="binding site" evidence="1">
    <location>
        <position position="833"/>
    </location>
    <ligand>
        <name>Zn(2+)</name>
        <dbReference type="ChEBI" id="CHEBI:29105"/>
    </ligand>
</feature>
<dbReference type="EC" id="7.4.2.8" evidence="1"/>
<dbReference type="EMBL" id="BA000034">
    <property type="protein sequence ID" value="BAC63397.1"/>
    <property type="molecule type" value="Genomic_DNA"/>
</dbReference>
<dbReference type="RefSeq" id="WP_002983193.1">
    <property type="nucleotide sequence ID" value="NC_004606.1"/>
</dbReference>
<dbReference type="SMR" id="P0DF67"/>
<dbReference type="KEGG" id="sps:SPs0302"/>
<dbReference type="HOGENOM" id="CLU_005314_3_0_9"/>
<dbReference type="GO" id="GO:0031522">
    <property type="term" value="C:cell envelope Sec protein transport complex"/>
    <property type="evidence" value="ECO:0007669"/>
    <property type="project" value="TreeGrafter"/>
</dbReference>
<dbReference type="GO" id="GO:0005829">
    <property type="term" value="C:cytosol"/>
    <property type="evidence" value="ECO:0007669"/>
    <property type="project" value="TreeGrafter"/>
</dbReference>
<dbReference type="GO" id="GO:0005886">
    <property type="term" value="C:plasma membrane"/>
    <property type="evidence" value="ECO:0007669"/>
    <property type="project" value="UniProtKB-SubCell"/>
</dbReference>
<dbReference type="GO" id="GO:0005524">
    <property type="term" value="F:ATP binding"/>
    <property type="evidence" value="ECO:0007669"/>
    <property type="project" value="UniProtKB-UniRule"/>
</dbReference>
<dbReference type="GO" id="GO:0046872">
    <property type="term" value="F:metal ion binding"/>
    <property type="evidence" value="ECO:0007669"/>
    <property type="project" value="UniProtKB-KW"/>
</dbReference>
<dbReference type="GO" id="GO:0008564">
    <property type="term" value="F:protein-exporting ATPase activity"/>
    <property type="evidence" value="ECO:0007669"/>
    <property type="project" value="UniProtKB-EC"/>
</dbReference>
<dbReference type="GO" id="GO:0065002">
    <property type="term" value="P:intracellular protein transmembrane transport"/>
    <property type="evidence" value="ECO:0007669"/>
    <property type="project" value="UniProtKB-UniRule"/>
</dbReference>
<dbReference type="GO" id="GO:0017038">
    <property type="term" value="P:protein import"/>
    <property type="evidence" value="ECO:0007669"/>
    <property type="project" value="InterPro"/>
</dbReference>
<dbReference type="GO" id="GO:0006605">
    <property type="term" value="P:protein targeting"/>
    <property type="evidence" value="ECO:0007669"/>
    <property type="project" value="UniProtKB-UniRule"/>
</dbReference>
<dbReference type="GO" id="GO:0043952">
    <property type="term" value="P:protein transport by the Sec complex"/>
    <property type="evidence" value="ECO:0007669"/>
    <property type="project" value="TreeGrafter"/>
</dbReference>
<dbReference type="CDD" id="cd17928">
    <property type="entry name" value="DEXDc_SecA"/>
    <property type="match status" value="1"/>
</dbReference>
<dbReference type="CDD" id="cd18803">
    <property type="entry name" value="SF2_C_secA"/>
    <property type="match status" value="1"/>
</dbReference>
<dbReference type="FunFam" id="1.10.3060.10:FF:000002">
    <property type="entry name" value="Preprotein translocase subunit SecA"/>
    <property type="match status" value="1"/>
</dbReference>
<dbReference type="FunFam" id="3.40.50.300:FF:000429">
    <property type="entry name" value="Preprotein translocase subunit SecA"/>
    <property type="match status" value="1"/>
</dbReference>
<dbReference type="FunFam" id="3.90.1440.10:FF:000001">
    <property type="entry name" value="Preprotein translocase subunit SecA"/>
    <property type="match status" value="1"/>
</dbReference>
<dbReference type="Gene3D" id="1.10.3060.10">
    <property type="entry name" value="Helical scaffold and wing domains of SecA"/>
    <property type="match status" value="1"/>
</dbReference>
<dbReference type="Gene3D" id="3.40.50.300">
    <property type="entry name" value="P-loop containing nucleotide triphosphate hydrolases"/>
    <property type="match status" value="3"/>
</dbReference>
<dbReference type="Gene3D" id="3.90.1440.10">
    <property type="entry name" value="SecA, preprotein cross-linking domain"/>
    <property type="match status" value="1"/>
</dbReference>
<dbReference type="HAMAP" id="MF_01382">
    <property type="entry name" value="SecA"/>
    <property type="match status" value="1"/>
</dbReference>
<dbReference type="InterPro" id="IPR014001">
    <property type="entry name" value="Helicase_ATP-bd"/>
</dbReference>
<dbReference type="InterPro" id="IPR001650">
    <property type="entry name" value="Helicase_C-like"/>
</dbReference>
<dbReference type="InterPro" id="IPR027417">
    <property type="entry name" value="P-loop_NTPase"/>
</dbReference>
<dbReference type="InterPro" id="IPR004027">
    <property type="entry name" value="SEC_C_motif"/>
</dbReference>
<dbReference type="InterPro" id="IPR000185">
    <property type="entry name" value="SecA"/>
</dbReference>
<dbReference type="InterPro" id="IPR020937">
    <property type="entry name" value="SecA_CS"/>
</dbReference>
<dbReference type="InterPro" id="IPR011115">
    <property type="entry name" value="SecA_DEAD"/>
</dbReference>
<dbReference type="InterPro" id="IPR014018">
    <property type="entry name" value="SecA_motor_DEAD"/>
</dbReference>
<dbReference type="InterPro" id="IPR011130">
    <property type="entry name" value="SecA_preprotein_X-link_dom"/>
</dbReference>
<dbReference type="InterPro" id="IPR044722">
    <property type="entry name" value="SecA_SF2_C"/>
</dbReference>
<dbReference type="InterPro" id="IPR011116">
    <property type="entry name" value="SecA_Wing/Scaffold"/>
</dbReference>
<dbReference type="InterPro" id="IPR036266">
    <property type="entry name" value="SecA_Wing/Scaffold_sf"/>
</dbReference>
<dbReference type="InterPro" id="IPR036670">
    <property type="entry name" value="SecA_X-link_sf"/>
</dbReference>
<dbReference type="NCBIfam" id="NF006630">
    <property type="entry name" value="PRK09200.1"/>
    <property type="match status" value="1"/>
</dbReference>
<dbReference type="NCBIfam" id="TIGR00963">
    <property type="entry name" value="secA"/>
    <property type="match status" value="1"/>
</dbReference>
<dbReference type="PANTHER" id="PTHR30612:SF0">
    <property type="entry name" value="CHLOROPLAST PROTEIN-TRANSPORTING ATPASE"/>
    <property type="match status" value="1"/>
</dbReference>
<dbReference type="PANTHER" id="PTHR30612">
    <property type="entry name" value="SECA INNER MEMBRANE COMPONENT OF SEC PROTEIN SECRETION SYSTEM"/>
    <property type="match status" value="1"/>
</dbReference>
<dbReference type="Pfam" id="PF21090">
    <property type="entry name" value="P-loop_SecA"/>
    <property type="match status" value="2"/>
</dbReference>
<dbReference type="Pfam" id="PF02810">
    <property type="entry name" value="SEC-C"/>
    <property type="match status" value="1"/>
</dbReference>
<dbReference type="Pfam" id="PF07517">
    <property type="entry name" value="SecA_DEAD"/>
    <property type="match status" value="1"/>
</dbReference>
<dbReference type="Pfam" id="PF01043">
    <property type="entry name" value="SecA_PP_bind"/>
    <property type="match status" value="1"/>
</dbReference>
<dbReference type="Pfam" id="PF07516">
    <property type="entry name" value="SecA_SW"/>
    <property type="match status" value="1"/>
</dbReference>
<dbReference type="PRINTS" id="PR00906">
    <property type="entry name" value="SECA"/>
</dbReference>
<dbReference type="SMART" id="SM00957">
    <property type="entry name" value="SecA_DEAD"/>
    <property type="match status" value="1"/>
</dbReference>
<dbReference type="SMART" id="SM00958">
    <property type="entry name" value="SecA_PP_bind"/>
    <property type="match status" value="1"/>
</dbReference>
<dbReference type="SUPFAM" id="SSF81886">
    <property type="entry name" value="Helical scaffold and wing domains of SecA"/>
    <property type="match status" value="1"/>
</dbReference>
<dbReference type="SUPFAM" id="SSF52540">
    <property type="entry name" value="P-loop containing nucleoside triphosphate hydrolases"/>
    <property type="match status" value="2"/>
</dbReference>
<dbReference type="SUPFAM" id="SSF81767">
    <property type="entry name" value="Pre-protein crosslinking domain of SecA"/>
    <property type="match status" value="1"/>
</dbReference>
<dbReference type="PROSITE" id="PS01312">
    <property type="entry name" value="SECA"/>
    <property type="match status" value="1"/>
</dbReference>
<dbReference type="PROSITE" id="PS51196">
    <property type="entry name" value="SECA_MOTOR_DEAD"/>
    <property type="match status" value="1"/>
</dbReference>
<name>SECA_STRPQ</name>
<protein>
    <recommendedName>
        <fullName evidence="1">Protein translocase subunit SecA</fullName>
        <ecNumber evidence="1">7.4.2.8</ecNumber>
    </recommendedName>
</protein>
<evidence type="ECO:0000255" key="1">
    <source>
        <dbReference type="HAMAP-Rule" id="MF_01382"/>
    </source>
</evidence>
<evidence type="ECO:0000256" key="2">
    <source>
        <dbReference type="SAM" id="MobiDB-lite"/>
    </source>
</evidence>
<organism>
    <name type="scientific">Streptococcus pyogenes serotype M3 (strain SSI-1)</name>
    <dbReference type="NCBI Taxonomy" id="193567"/>
    <lineage>
        <taxon>Bacteria</taxon>
        <taxon>Bacillati</taxon>
        <taxon>Bacillota</taxon>
        <taxon>Bacilli</taxon>
        <taxon>Lactobacillales</taxon>
        <taxon>Streptococcaceae</taxon>
        <taxon>Streptococcus</taxon>
    </lineage>
</organism>
<gene>
    <name evidence="1" type="primary">secA</name>
    <name type="ordered locus">SPs0302</name>
</gene>
<keyword id="KW-0067">ATP-binding</keyword>
<keyword id="KW-1003">Cell membrane</keyword>
<keyword id="KW-0963">Cytoplasm</keyword>
<keyword id="KW-0472">Membrane</keyword>
<keyword id="KW-0479">Metal-binding</keyword>
<keyword id="KW-0547">Nucleotide-binding</keyword>
<keyword id="KW-0653">Protein transport</keyword>
<keyword id="KW-1278">Translocase</keyword>
<keyword id="KW-0811">Translocation</keyword>
<keyword id="KW-0813">Transport</keyword>
<keyword id="KW-0862">Zinc</keyword>
<comment type="function">
    <text evidence="1">Part of the Sec protein translocase complex. Interacts with the SecYEG preprotein conducting channel. Has a central role in coupling the hydrolysis of ATP to the transfer of proteins into and across the cell membrane, serving as an ATP-driven molecular motor driving the stepwise translocation of polypeptide chains across the membrane.</text>
</comment>
<comment type="catalytic activity">
    <reaction evidence="1">
        <text>ATP + H2O + cellular proteinSide 1 = ADP + phosphate + cellular proteinSide 2.</text>
        <dbReference type="EC" id="7.4.2.8"/>
    </reaction>
</comment>
<comment type="cofactor">
    <cofactor evidence="1">
        <name>Zn(2+)</name>
        <dbReference type="ChEBI" id="CHEBI:29105"/>
    </cofactor>
    <text evidence="1">May bind 1 zinc ion per subunit.</text>
</comment>
<comment type="subunit">
    <text evidence="1">Monomer and homodimer. Part of the essential Sec protein translocation apparatus which comprises SecA, SecYEG and auxiliary proteins SecDF. Other proteins may also be involved.</text>
</comment>
<comment type="subcellular location">
    <subcellularLocation>
        <location evidence="1">Cell membrane</location>
        <topology evidence="1">Peripheral membrane protein</topology>
        <orientation evidence="1">Cytoplasmic side</orientation>
    </subcellularLocation>
    <subcellularLocation>
        <location evidence="1">Cytoplasm</location>
    </subcellularLocation>
    <text evidence="1">Distribution is 50-50.</text>
</comment>
<comment type="similarity">
    <text evidence="1">Belongs to the SecA family.</text>
</comment>
<proteinExistence type="inferred from homology"/>
<reference key="1">
    <citation type="journal article" date="2003" name="Genome Res.">
        <title>Genome sequence of an M3 strain of Streptococcus pyogenes reveals a large-scale genomic rearrangement in invasive strains and new insights into phage evolution.</title>
        <authorList>
            <person name="Nakagawa I."/>
            <person name="Kurokawa K."/>
            <person name="Yamashita A."/>
            <person name="Nakata M."/>
            <person name="Tomiyasu Y."/>
            <person name="Okahashi N."/>
            <person name="Kawabata S."/>
            <person name="Yamazaki K."/>
            <person name="Shiba T."/>
            <person name="Yasunaga T."/>
            <person name="Hayashi H."/>
            <person name="Hattori M."/>
            <person name="Hamada S."/>
        </authorList>
    </citation>
    <scope>NUCLEOTIDE SEQUENCE [LARGE SCALE GENOMIC DNA]</scope>
    <source>
        <strain>SSI-1</strain>
    </source>
</reference>
<sequence>MANILRKVIENDKGELRKLEKIAKKVESYADQMASLSDRDLQGKTLEFKERYQKGETLEQLLPEAFAVVREAAKRVLGLFPYRVQIMGGIVLHNGDVPEMRTGEGKTLTATMPVYLNAIAGEGVHVITVNEYLSTRDATEMGEVYSWLGLSVGINLAAKSPAEKREAYNCDITYSTNSEVGFDYLRDNMVVRQEDMVQRPLNFALVDEVDSVLIDEARTPLIVSGAVSSETNQLYIRADMFVKTLTSVDYVIDVPTKTIGLSDSGIDKAESYFNLSNLYDIENVALTHFIDNALRANYIMLLDIDYVVSEDGEILIVDQFTGRTMEGRRFSDGLHQAIEAKEGVRIQEESKTSASITYQNMFRMYKKLAGMTGTAKTEEEEFREVYNMRIIPIPTNRPIARIDHTDLLYPTLESKFRAVVEDVKTRHAKGQPILVGTVAVETSDLISRKLVEAGIPHEVLNAKNHFKEAQIIMNAGQRGAVTIATNMAGRGTDIKLGEGVRELGGLCVIGTERHESRRIDNQLRGRSGRQGDPGESQFYLSLEDDLMRRFGSDRIKAFLDRMKLDEEDTVIKSGMLGRQVESAQKRVEGNNYDTRKQVLQYDDVMREQREIIYANRRDVITANRDLGPEIKAMIKRTIDRAVDAHARSNRKDAVDAIVTFARTSLVPEESISAKELRGLKDEQIKEKLYQRALAIYDQQLSKLRDQEAIIEFQKVLILMIVDNKWTEHIDALDQLRNAVGLRGYAQNNPVVEYQAEGFKMFQDMIGAIEFDVTRTMMKAQIHEQERERASQRATTAAPQNIQSQQSANTDDLPKVERNEACPCGSGKKFKNCHGRKSFS</sequence>